<feature type="chain" id="PRO_1000200124" description="UPF0102 protein Athe_0977">
    <location>
        <begin position="1"/>
        <end position="119"/>
    </location>
</feature>
<gene>
    <name type="ordered locus">Athe_0977</name>
</gene>
<sequence length="119" mass="13974">MNLKQVGRFGENLAVDFLIKHGYEILRTNFRCRLGEIDIIAKEDKTIVFVEVKTRKSLKFGLPSESVNFKKQLHIKKVAEYFIAYHLSQDKYLYRFDVVEIFIDGKNNVTKINLIKDAF</sequence>
<organism>
    <name type="scientific">Caldicellulosiruptor bescii (strain ATCC BAA-1888 / DSM 6725 / KCTC 15123 / Z-1320)</name>
    <name type="common">Anaerocellum thermophilum</name>
    <dbReference type="NCBI Taxonomy" id="521460"/>
    <lineage>
        <taxon>Bacteria</taxon>
        <taxon>Bacillati</taxon>
        <taxon>Bacillota</taxon>
        <taxon>Bacillota incertae sedis</taxon>
        <taxon>Caldicellulosiruptorales</taxon>
        <taxon>Caldicellulosiruptoraceae</taxon>
        <taxon>Caldicellulosiruptor</taxon>
    </lineage>
</organism>
<reference key="1">
    <citation type="submission" date="2009-01" db="EMBL/GenBank/DDBJ databases">
        <title>Complete sequence of chromosome of Caldicellulosiruptor becscii DSM 6725.</title>
        <authorList>
            <person name="Lucas S."/>
            <person name="Copeland A."/>
            <person name="Lapidus A."/>
            <person name="Glavina del Rio T."/>
            <person name="Tice H."/>
            <person name="Bruce D."/>
            <person name="Goodwin L."/>
            <person name="Pitluck S."/>
            <person name="Sims D."/>
            <person name="Meincke L."/>
            <person name="Brettin T."/>
            <person name="Detter J.C."/>
            <person name="Han C."/>
            <person name="Larimer F."/>
            <person name="Land M."/>
            <person name="Hauser L."/>
            <person name="Kyrpides N."/>
            <person name="Ovchinnikova G."/>
            <person name="Kataeva I."/>
            <person name="Adams M.W.W."/>
        </authorList>
    </citation>
    <scope>NUCLEOTIDE SEQUENCE [LARGE SCALE GENOMIC DNA]</scope>
    <source>
        <strain>ATCC BAA-1888 / DSM 6725 / KCTC 15123 / Z-1320</strain>
    </source>
</reference>
<protein>
    <recommendedName>
        <fullName evidence="1">UPF0102 protein Athe_0977</fullName>
    </recommendedName>
</protein>
<name>Y977_CALBD</name>
<comment type="similarity">
    <text evidence="1">Belongs to the UPF0102 family.</text>
</comment>
<accession>B9MQX5</accession>
<evidence type="ECO:0000255" key="1">
    <source>
        <dbReference type="HAMAP-Rule" id="MF_00048"/>
    </source>
</evidence>
<dbReference type="EMBL" id="CP001393">
    <property type="protein sequence ID" value="ACM60079.1"/>
    <property type="molecule type" value="Genomic_DNA"/>
</dbReference>
<dbReference type="RefSeq" id="WP_015907497.1">
    <property type="nucleotide sequence ID" value="NC_012034.1"/>
</dbReference>
<dbReference type="SMR" id="B9MQX5"/>
<dbReference type="STRING" id="521460.Athe_0977"/>
<dbReference type="GeneID" id="31772329"/>
<dbReference type="KEGG" id="ate:Athe_0977"/>
<dbReference type="eggNOG" id="COG0792">
    <property type="taxonomic scope" value="Bacteria"/>
</dbReference>
<dbReference type="HOGENOM" id="CLU_115353_2_3_9"/>
<dbReference type="Proteomes" id="UP000007723">
    <property type="component" value="Chromosome"/>
</dbReference>
<dbReference type="GO" id="GO:0003676">
    <property type="term" value="F:nucleic acid binding"/>
    <property type="evidence" value="ECO:0007669"/>
    <property type="project" value="InterPro"/>
</dbReference>
<dbReference type="CDD" id="cd20736">
    <property type="entry name" value="PoNe_Nuclease"/>
    <property type="match status" value="1"/>
</dbReference>
<dbReference type="Gene3D" id="3.40.1350.10">
    <property type="match status" value="1"/>
</dbReference>
<dbReference type="HAMAP" id="MF_00048">
    <property type="entry name" value="UPF0102"/>
    <property type="match status" value="1"/>
</dbReference>
<dbReference type="InterPro" id="IPR011335">
    <property type="entry name" value="Restrct_endonuc-II-like"/>
</dbReference>
<dbReference type="InterPro" id="IPR011856">
    <property type="entry name" value="tRNA_endonuc-like_dom_sf"/>
</dbReference>
<dbReference type="InterPro" id="IPR003509">
    <property type="entry name" value="UPF0102_YraN-like"/>
</dbReference>
<dbReference type="NCBIfam" id="NF009150">
    <property type="entry name" value="PRK12497.1-3"/>
    <property type="match status" value="1"/>
</dbReference>
<dbReference type="NCBIfam" id="NF009154">
    <property type="entry name" value="PRK12497.3-3"/>
    <property type="match status" value="1"/>
</dbReference>
<dbReference type="NCBIfam" id="TIGR00252">
    <property type="entry name" value="YraN family protein"/>
    <property type="match status" value="1"/>
</dbReference>
<dbReference type="PANTHER" id="PTHR34039">
    <property type="entry name" value="UPF0102 PROTEIN YRAN"/>
    <property type="match status" value="1"/>
</dbReference>
<dbReference type="PANTHER" id="PTHR34039:SF1">
    <property type="entry name" value="UPF0102 PROTEIN YRAN"/>
    <property type="match status" value="1"/>
</dbReference>
<dbReference type="Pfam" id="PF02021">
    <property type="entry name" value="UPF0102"/>
    <property type="match status" value="1"/>
</dbReference>
<dbReference type="SUPFAM" id="SSF52980">
    <property type="entry name" value="Restriction endonuclease-like"/>
    <property type="match status" value="1"/>
</dbReference>
<proteinExistence type="inferred from homology"/>